<evidence type="ECO:0000250" key="1"/>
<evidence type="ECO:0000250" key="2">
    <source>
        <dbReference type="UniProtKB" id="P0AEN1"/>
    </source>
</evidence>
<evidence type="ECO:0000250" key="3">
    <source>
        <dbReference type="UniProtKB" id="Q9L6L9"/>
    </source>
</evidence>
<evidence type="ECO:0000255" key="4">
    <source>
        <dbReference type="PROSITE-ProRule" id="PRU00716"/>
    </source>
</evidence>
<evidence type="ECO:0000305" key="5"/>
<comment type="function">
    <text evidence="3">Catalyzes the reduction of soluble flavins by reduced pyridine nucleotides.</text>
</comment>
<comment type="catalytic activity">
    <reaction evidence="3">
        <text>reduced riboflavin + NADP(+) = riboflavin + NADPH + 2 H(+)</text>
        <dbReference type="Rhea" id="RHEA:19377"/>
        <dbReference type="ChEBI" id="CHEBI:15378"/>
        <dbReference type="ChEBI" id="CHEBI:17607"/>
        <dbReference type="ChEBI" id="CHEBI:57783"/>
        <dbReference type="ChEBI" id="CHEBI:57986"/>
        <dbReference type="ChEBI" id="CHEBI:58349"/>
        <dbReference type="EC" id="1.5.1.41"/>
    </reaction>
</comment>
<comment type="catalytic activity">
    <reaction evidence="3">
        <text>reduced riboflavin + NAD(+) = riboflavin + NADH + 2 H(+)</text>
        <dbReference type="Rhea" id="RHEA:31455"/>
        <dbReference type="ChEBI" id="CHEBI:15378"/>
        <dbReference type="ChEBI" id="CHEBI:17607"/>
        <dbReference type="ChEBI" id="CHEBI:57540"/>
        <dbReference type="ChEBI" id="CHEBI:57945"/>
        <dbReference type="ChEBI" id="CHEBI:57986"/>
        <dbReference type="EC" id="1.5.1.41"/>
    </reaction>
</comment>
<comment type="subunit">
    <text evidence="2">Monomer.</text>
</comment>
<comment type="similarity">
    <text evidence="5">Belongs to the Fre/LuxG FAD/NAD(P) flavoprotein oxidoreductase family.</text>
</comment>
<name>FRE_ECO57</name>
<reference key="1">
    <citation type="journal article" date="2001" name="Nature">
        <title>Genome sequence of enterohaemorrhagic Escherichia coli O157:H7.</title>
        <authorList>
            <person name="Perna N.T."/>
            <person name="Plunkett G. III"/>
            <person name="Burland V."/>
            <person name="Mau B."/>
            <person name="Glasner J.D."/>
            <person name="Rose D.J."/>
            <person name="Mayhew G.F."/>
            <person name="Evans P.S."/>
            <person name="Gregor J."/>
            <person name="Kirkpatrick H.A."/>
            <person name="Posfai G."/>
            <person name="Hackett J."/>
            <person name="Klink S."/>
            <person name="Boutin A."/>
            <person name="Shao Y."/>
            <person name="Miller L."/>
            <person name="Grotbeck E.J."/>
            <person name="Davis N.W."/>
            <person name="Lim A."/>
            <person name="Dimalanta E.T."/>
            <person name="Potamousis K."/>
            <person name="Apodaca J."/>
            <person name="Anantharaman T.S."/>
            <person name="Lin J."/>
            <person name="Yen G."/>
            <person name="Schwartz D.C."/>
            <person name="Welch R.A."/>
            <person name="Blattner F.R."/>
        </authorList>
    </citation>
    <scope>NUCLEOTIDE SEQUENCE [LARGE SCALE GENOMIC DNA]</scope>
    <source>
        <strain>O157:H7 / EDL933 / ATCC 700927 / EHEC</strain>
    </source>
</reference>
<reference key="2">
    <citation type="journal article" date="2001" name="DNA Res.">
        <title>Complete genome sequence of enterohemorrhagic Escherichia coli O157:H7 and genomic comparison with a laboratory strain K-12.</title>
        <authorList>
            <person name="Hayashi T."/>
            <person name="Makino K."/>
            <person name="Ohnishi M."/>
            <person name="Kurokawa K."/>
            <person name="Ishii K."/>
            <person name="Yokoyama K."/>
            <person name="Han C.-G."/>
            <person name="Ohtsubo E."/>
            <person name="Nakayama K."/>
            <person name="Murata T."/>
            <person name="Tanaka M."/>
            <person name="Tobe T."/>
            <person name="Iida T."/>
            <person name="Takami H."/>
            <person name="Honda T."/>
            <person name="Sasakawa C."/>
            <person name="Ogasawara N."/>
            <person name="Yasunaga T."/>
            <person name="Kuhara S."/>
            <person name="Shiba T."/>
            <person name="Hattori M."/>
            <person name="Shinagawa H."/>
        </authorList>
    </citation>
    <scope>NUCLEOTIDE SEQUENCE [LARGE SCALE GENOMIC DNA]</scope>
    <source>
        <strain>O157:H7 / Sakai / RIMD 0509952 / EHEC</strain>
    </source>
</reference>
<feature type="initiator methionine" description="Removed" evidence="1">
    <location>
        <position position="1"/>
    </location>
</feature>
<feature type="chain" id="PRO_0000068145" description="NAD(P)H-flavin reductase">
    <location>
        <begin position="2"/>
        <end position="233"/>
    </location>
</feature>
<feature type="domain" description="FAD-binding FR-type" evidence="4">
    <location>
        <begin position="2"/>
        <end position="99"/>
    </location>
</feature>
<feature type="binding site" evidence="1">
    <location>
        <begin position="111"/>
        <end position="115"/>
    </location>
    <ligand>
        <name>pyridine</name>
        <dbReference type="ChEBI" id="CHEBI:16227"/>
    </ligand>
</feature>
<accession>P0AEN3</accession>
<accession>P23486</accession>
<accession>P76768</accession>
<keyword id="KW-0274">FAD</keyword>
<keyword id="KW-0285">Flavoprotein</keyword>
<keyword id="KW-0288">FMN</keyword>
<keyword id="KW-0406">Ion transport</keyword>
<keyword id="KW-0408">Iron</keyword>
<keyword id="KW-0410">Iron transport</keyword>
<keyword id="KW-0520">NAD</keyword>
<keyword id="KW-0521">NADP</keyword>
<keyword id="KW-0560">Oxidoreductase</keyword>
<keyword id="KW-1185">Reference proteome</keyword>
<keyword id="KW-0813">Transport</keyword>
<protein>
    <recommendedName>
        <fullName>NAD(P)H-flavin reductase</fullName>
        <ecNumber evidence="3">1.5.1.41</ecNumber>
    </recommendedName>
    <alternativeName>
        <fullName>FMN reductase</fullName>
    </alternativeName>
    <alternativeName>
        <fullName>Ferrisiderophore reductase C</fullName>
    </alternativeName>
    <alternativeName>
        <fullName>NAD(P)H:flavin oxidoreductase</fullName>
    </alternativeName>
    <alternativeName>
        <fullName>Riboflavin reductase [NAD(P)H]</fullName>
    </alternativeName>
</protein>
<gene>
    <name type="primary">fre</name>
    <name type="synonym">ubiB</name>
    <name type="ordered locus">Z5365</name>
    <name type="ordered locus">ECs4772</name>
</gene>
<proteinExistence type="inferred from homology"/>
<dbReference type="EC" id="1.5.1.41" evidence="3"/>
<dbReference type="EMBL" id="AE005174">
    <property type="protein sequence ID" value="AAG59038.1"/>
    <property type="molecule type" value="Genomic_DNA"/>
</dbReference>
<dbReference type="EMBL" id="BA000007">
    <property type="protein sequence ID" value="BAB38195.1"/>
    <property type="molecule type" value="Genomic_DNA"/>
</dbReference>
<dbReference type="PIR" id="B86072">
    <property type="entry name" value="B86072"/>
</dbReference>
<dbReference type="PIR" id="D91225">
    <property type="entry name" value="D91225"/>
</dbReference>
<dbReference type="RefSeq" id="NP_312799.1">
    <property type="nucleotide sequence ID" value="NC_002695.1"/>
</dbReference>
<dbReference type="RefSeq" id="WP_000209826.1">
    <property type="nucleotide sequence ID" value="NZ_VOAI01000017.1"/>
</dbReference>
<dbReference type="SMR" id="P0AEN3"/>
<dbReference type="STRING" id="155864.Z5365"/>
<dbReference type="GeneID" id="915131"/>
<dbReference type="GeneID" id="93778093"/>
<dbReference type="KEGG" id="ece:Z5365"/>
<dbReference type="KEGG" id="ecs:ECs_4772"/>
<dbReference type="PATRIC" id="fig|386585.9.peg.4981"/>
<dbReference type="eggNOG" id="COG0543">
    <property type="taxonomic scope" value="Bacteria"/>
</dbReference>
<dbReference type="HOGENOM" id="CLU_003827_7_4_6"/>
<dbReference type="OMA" id="PCRHEGE"/>
<dbReference type="Proteomes" id="UP000000558">
    <property type="component" value="Chromosome"/>
</dbReference>
<dbReference type="Proteomes" id="UP000002519">
    <property type="component" value="Chromosome"/>
</dbReference>
<dbReference type="GO" id="GO:0042602">
    <property type="term" value="F:riboflavin reductase (NADPH) activity"/>
    <property type="evidence" value="ECO:0007669"/>
    <property type="project" value="RHEA"/>
</dbReference>
<dbReference type="GO" id="GO:0052875">
    <property type="term" value="F:riboflavin reductase [NAD(P)H] activity"/>
    <property type="evidence" value="ECO:0007669"/>
    <property type="project" value="UniProtKB-EC"/>
</dbReference>
<dbReference type="GO" id="GO:0006826">
    <property type="term" value="P:iron ion transport"/>
    <property type="evidence" value="ECO:0007669"/>
    <property type="project" value="UniProtKB-KW"/>
</dbReference>
<dbReference type="CDD" id="cd06189">
    <property type="entry name" value="flavin_oxioreductase"/>
    <property type="match status" value="1"/>
</dbReference>
<dbReference type="FunFam" id="2.40.30.10:FF:000042">
    <property type="entry name" value="NAD(P)H-flavin reductase"/>
    <property type="match status" value="1"/>
</dbReference>
<dbReference type="FunFam" id="3.40.50.80:FF:000016">
    <property type="entry name" value="NAD(P)H-flavin reductase"/>
    <property type="match status" value="1"/>
</dbReference>
<dbReference type="Gene3D" id="3.40.50.80">
    <property type="entry name" value="Nucleotide-binding domain of ferredoxin-NADP reductase (FNR) module"/>
    <property type="match status" value="1"/>
</dbReference>
<dbReference type="Gene3D" id="2.40.30.10">
    <property type="entry name" value="Translation factors"/>
    <property type="match status" value="1"/>
</dbReference>
<dbReference type="InterPro" id="IPR008333">
    <property type="entry name" value="Cbr1-like_FAD-bd_dom"/>
</dbReference>
<dbReference type="InterPro" id="IPR017927">
    <property type="entry name" value="FAD-bd_FR_type"/>
</dbReference>
<dbReference type="InterPro" id="IPR039261">
    <property type="entry name" value="FNR_nucleotide-bd"/>
</dbReference>
<dbReference type="InterPro" id="IPR001433">
    <property type="entry name" value="OxRdtase_FAD/NAD-bd"/>
</dbReference>
<dbReference type="InterPro" id="IPR017938">
    <property type="entry name" value="Riboflavin_synthase-like_b-brl"/>
</dbReference>
<dbReference type="NCBIfam" id="NF005963">
    <property type="entry name" value="PRK08051.1"/>
    <property type="match status" value="1"/>
</dbReference>
<dbReference type="PANTHER" id="PTHR43644">
    <property type="entry name" value="NA(+)-TRANSLOCATING NADH-QUINONE REDUCTASE SUBUNIT"/>
    <property type="match status" value="1"/>
</dbReference>
<dbReference type="PANTHER" id="PTHR43644:SF1">
    <property type="entry name" value="NAD(P)H-FLAVIN REDUCTASE"/>
    <property type="match status" value="1"/>
</dbReference>
<dbReference type="Pfam" id="PF00970">
    <property type="entry name" value="FAD_binding_6"/>
    <property type="match status" value="1"/>
</dbReference>
<dbReference type="Pfam" id="PF00175">
    <property type="entry name" value="NAD_binding_1"/>
    <property type="match status" value="1"/>
</dbReference>
<dbReference type="PRINTS" id="PR00410">
    <property type="entry name" value="PHEHYDRXLASE"/>
</dbReference>
<dbReference type="SUPFAM" id="SSF52343">
    <property type="entry name" value="Ferredoxin reductase-like, C-terminal NADP-linked domain"/>
    <property type="match status" value="1"/>
</dbReference>
<dbReference type="SUPFAM" id="SSF63380">
    <property type="entry name" value="Riboflavin synthase domain-like"/>
    <property type="match status" value="1"/>
</dbReference>
<dbReference type="PROSITE" id="PS51384">
    <property type="entry name" value="FAD_FR"/>
    <property type="match status" value="1"/>
</dbReference>
<organism>
    <name type="scientific">Escherichia coli O157:H7</name>
    <dbReference type="NCBI Taxonomy" id="83334"/>
    <lineage>
        <taxon>Bacteria</taxon>
        <taxon>Pseudomonadati</taxon>
        <taxon>Pseudomonadota</taxon>
        <taxon>Gammaproteobacteria</taxon>
        <taxon>Enterobacterales</taxon>
        <taxon>Enterobacteriaceae</taxon>
        <taxon>Escherichia</taxon>
    </lineage>
</organism>
<sequence>MTTLSCKVTSVEAITDTVYRVRIVPDAAFSFRAGQYLMVVMDERDKRPFSMASTPDEKGFIELHIGASEINLYAKAVMDRILKDHQIVVDIPHGEAWLRDDEERPMILIAGGTGFSYARSILLTALARNPNRDITIYWGGREEQHLYDLCELEALSLKHPGLQVVPVVEQPEAGWRGRTGTVLTAVLQDHGTLAEHDIYIAGRFEMAKIARDLFCSERNAREDRLFGDAFAFI</sequence>